<feature type="chain" id="PRO_0000303603" description="tRNA N6-adenosine threonylcarbamoyltransferase">
    <location>
        <begin position="1"/>
        <end position="401"/>
    </location>
</feature>
<feature type="binding site" evidence="1">
    <location>
        <position position="111"/>
    </location>
    <ligand>
        <name>Fe cation</name>
        <dbReference type="ChEBI" id="CHEBI:24875"/>
    </ligand>
</feature>
<feature type="binding site" evidence="1">
    <location>
        <position position="115"/>
    </location>
    <ligand>
        <name>Fe cation</name>
        <dbReference type="ChEBI" id="CHEBI:24875"/>
    </ligand>
</feature>
<feature type="binding site" evidence="1">
    <location>
        <begin position="191"/>
        <end position="195"/>
    </location>
    <ligand>
        <name>substrate</name>
    </ligand>
</feature>
<feature type="binding site" evidence="1">
    <location>
        <position position="223"/>
    </location>
    <ligand>
        <name>substrate</name>
    </ligand>
</feature>
<feature type="binding site" evidence="1">
    <location>
        <position position="236"/>
    </location>
    <ligand>
        <name>substrate</name>
    </ligand>
</feature>
<feature type="binding site" evidence="1">
    <location>
        <position position="336"/>
    </location>
    <ligand>
        <name>substrate</name>
    </ligand>
</feature>
<feature type="binding site" evidence="1">
    <location>
        <position position="364"/>
    </location>
    <ligand>
        <name>Fe cation</name>
        <dbReference type="ChEBI" id="CHEBI:24875"/>
    </ligand>
</feature>
<sequence>MSIILGIETSCDETGVGIVSGSTVLANEVASSSLRHKPFGGVIPEIAARAHLEYLPNLLELALETAQLCIKDIDGIAVTAGPGLVTSLSVGVSAAKALGLSTGTPVYGVNHLVGHAVSAFLDDYTNDGLGVIHRRDSIGSNGIENDASSTHSHTHTTQVNRHSNLCVYTPPRRVLRDVCKYMHVRDSVVLLASGGHSCLLKIHNNKISLLGETLDDAAGEAFDKIARLMGLQYPGGPAIEMLASSGNPNAVEFPRALLTHFEEHNRYSFSFSGLKTAVGRVVERIKSNPAHSIPKIEDIAASFQEAVADVLTAKTVAAALASDVDLIVMGGGVAANNRIREMLCERAKIHGLDVKIPPIALCTDNGAMIAAAGSWLMQLGYNPSHSRFSPVSIMPLTQMVV</sequence>
<dbReference type="EC" id="2.3.1.234" evidence="1"/>
<dbReference type="EMBL" id="BX251410">
    <property type="protein sequence ID" value="CAD66849.1"/>
    <property type="molecule type" value="Genomic_DNA"/>
</dbReference>
<dbReference type="RefSeq" id="WP_011096130.1">
    <property type="nucleotide sequence ID" value="NC_004551.1"/>
</dbReference>
<dbReference type="SMR" id="Q83I95"/>
<dbReference type="GeneID" id="67387948"/>
<dbReference type="KEGG" id="tws:TW170"/>
<dbReference type="HOGENOM" id="CLU_023208_0_2_11"/>
<dbReference type="GO" id="GO:0005737">
    <property type="term" value="C:cytoplasm"/>
    <property type="evidence" value="ECO:0007669"/>
    <property type="project" value="UniProtKB-SubCell"/>
</dbReference>
<dbReference type="GO" id="GO:0005506">
    <property type="term" value="F:iron ion binding"/>
    <property type="evidence" value="ECO:0007669"/>
    <property type="project" value="UniProtKB-UniRule"/>
</dbReference>
<dbReference type="GO" id="GO:0061711">
    <property type="term" value="F:N(6)-L-threonylcarbamoyladenine synthase activity"/>
    <property type="evidence" value="ECO:0007669"/>
    <property type="project" value="UniProtKB-EC"/>
</dbReference>
<dbReference type="GO" id="GO:0002949">
    <property type="term" value="P:tRNA threonylcarbamoyladenosine modification"/>
    <property type="evidence" value="ECO:0007669"/>
    <property type="project" value="UniProtKB-UniRule"/>
</dbReference>
<dbReference type="FunFam" id="3.30.420.40:FF:000012">
    <property type="entry name" value="tRNA N6-adenosine threonylcarbamoyltransferase"/>
    <property type="match status" value="1"/>
</dbReference>
<dbReference type="FunFam" id="3.30.420.40:FF:000040">
    <property type="entry name" value="tRNA N6-adenosine threonylcarbamoyltransferase"/>
    <property type="match status" value="1"/>
</dbReference>
<dbReference type="Gene3D" id="3.30.420.40">
    <property type="match status" value="2"/>
</dbReference>
<dbReference type="HAMAP" id="MF_01445">
    <property type="entry name" value="TsaD"/>
    <property type="match status" value="1"/>
</dbReference>
<dbReference type="InterPro" id="IPR043129">
    <property type="entry name" value="ATPase_NBD"/>
</dbReference>
<dbReference type="InterPro" id="IPR000905">
    <property type="entry name" value="Gcp-like_dom"/>
</dbReference>
<dbReference type="InterPro" id="IPR017861">
    <property type="entry name" value="KAE1/TsaD"/>
</dbReference>
<dbReference type="InterPro" id="IPR022450">
    <property type="entry name" value="TsaD"/>
</dbReference>
<dbReference type="PANTHER" id="PTHR11735">
    <property type="entry name" value="TRNA N6-ADENOSINE THREONYLCARBAMOYLTRANSFERASE"/>
    <property type="match status" value="1"/>
</dbReference>
<dbReference type="PANTHER" id="PTHR11735:SF6">
    <property type="entry name" value="TRNA N6-ADENOSINE THREONYLCARBAMOYLTRANSFERASE, MITOCHONDRIAL"/>
    <property type="match status" value="1"/>
</dbReference>
<dbReference type="Pfam" id="PF00814">
    <property type="entry name" value="TsaD"/>
    <property type="match status" value="2"/>
</dbReference>
<dbReference type="PRINTS" id="PR00789">
    <property type="entry name" value="OSIALOPTASE"/>
</dbReference>
<dbReference type="SUPFAM" id="SSF53067">
    <property type="entry name" value="Actin-like ATPase domain"/>
    <property type="match status" value="2"/>
</dbReference>
<organism>
    <name type="scientific">Tropheryma whipplei (strain TW08/27)</name>
    <name type="common">Whipple's bacillus</name>
    <dbReference type="NCBI Taxonomy" id="218496"/>
    <lineage>
        <taxon>Bacteria</taxon>
        <taxon>Bacillati</taxon>
        <taxon>Actinomycetota</taxon>
        <taxon>Actinomycetes</taxon>
        <taxon>Micrococcales</taxon>
        <taxon>Tropherymataceae</taxon>
        <taxon>Tropheryma</taxon>
    </lineage>
</organism>
<accession>Q83I95</accession>
<evidence type="ECO:0000255" key="1">
    <source>
        <dbReference type="HAMAP-Rule" id="MF_01445"/>
    </source>
</evidence>
<comment type="function">
    <text evidence="1">Required for the formation of a threonylcarbamoyl group on adenosine at position 37 (t(6)A37) in tRNAs that read codons beginning with adenine. Is involved in the transfer of the threonylcarbamoyl moiety of threonylcarbamoyl-AMP (TC-AMP) to the N6 group of A37, together with TsaE and TsaB. TsaD likely plays a direct catalytic role in this reaction.</text>
</comment>
<comment type="catalytic activity">
    <reaction evidence="1">
        <text>L-threonylcarbamoyladenylate + adenosine(37) in tRNA = N(6)-L-threonylcarbamoyladenosine(37) in tRNA + AMP + H(+)</text>
        <dbReference type="Rhea" id="RHEA:37059"/>
        <dbReference type="Rhea" id="RHEA-COMP:10162"/>
        <dbReference type="Rhea" id="RHEA-COMP:10163"/>
        <dbReference type="ChEBI" id="CHEBI:15378"/>
        <dbReference type="ChEBI" id="CHEBI:73682"/>
        <dbReference type="ChEBI" id="CHEBI:74411"/>
        <dbReference type="ChEBI" id="CHEBI:74418"/>
        <dbReference type="ChEBI" id="CHEBI:456215"/>
        <dbReference type="EC" id="2.3.1.234"/>
    </reaction>
</comment>
<comment type="cofactor">
    <cofactor evidence="1">
        <name>Fe(2+)</name>
        <dbReference type="ChEBI" id="CHEBI:29033"/>
    </cofactor>
    <text evidence="1">Binds 1 Fe(2+) ion per subunit.</text>
</comment>
<comment type="subcellular location">
    <subcellularLocation>
        <location evidence="1">Cytoplasm</location>
    </subcellularLocation>
</comment>
<comment type="similarity">
    <text evidence="1">Belongs to the KAE1 / TsaD family.</text>
</comment>
<protein>
    <recommendedName>
        <fullName evidence="1">tRNA N6-adenosine threonylcarbamoyltransferase</fullName>
        <ecNumber evidence="1">2.3.1.234</ecNumber>
    </recommendedName>
    <alternativeName>
        <fullName evidence="1">N6-L-threonylcarbamoyladenine synthase</fullName>
        <shortName evidence="1">t(6)A synthase</shortName>
    </alternativeName>
    <alternativeName>
        <fullName evidence="1">t(6)A37 threonylcarbamoyladenosine biosynthesis protein TsaD</fullName>
    </alternativeName>
    <alternativeName>
        <fullName evidence="1">tRNA threonylcarbamoyladenosine biosynthesis protein TsaD</fullName>
    </alternativeName>
</protein>
<keyword id="KW-0012">Acyltransferase</keyword>
<keyword id="KW-0963">Cytoplasm</keyword>
<keyword id="KW-0408">Iron</keyword>
<keyword id="KW-0479">Metal-binding</keyword>
<keyword id="KW-0808">Transferase</keyword>
<keyword id="KW-0819">tRNA processing</keyword>
<gene>
    <name evidence="1" type="primary">tsaD</name>
    <name type="synonym">gcp</name>
    <name type="ordered locus">TW170</name>
</gene>
<reference key="1">
    <citation type="journal article" date="2003" name="Lancet">
        <title>Sequencing and analysis of the genome of the Whipple's disease bacterium Tropheryma whipplei.</title>
        <authorList>
            <person name="Bentley S.D."/>
            <person name="Maiwald M."/>
            <person name="Murphy L.D."/>
            <person name="Pallen M.J."/>
            <person name="Yeats C.A."/>
            <person name="Dover L.G."/>
            <person name="Norbertczak H.T."/>
            <person name="Besra G.S."/>
            <person name="Quail M.A."/>
            <person name="Harris D.E."/>
            <person name="von Herbay A."/>
            <person name="Goble A."/>
            <person name="Rutter S."/>
            <person name="Squares R."/>
            <person name="Squares S."/>
            <person name="Barrell B.G."/>
            <person name="Parkhill J."/>
            <person name="Relman D.A."/>
        </authorList>
    </citation>
    <scope>NUCLEOTIDE SEQUENCE [LARGE SCALE GENOMIC DNA]</scope>
    <source>
        <strain>TW08/27</strain>
    </source>
</reference>
<name>TSAD_TROW8</name>
<proteinExistence type="inferred from homology"/>